<protein>
    <recommendedName>
        <fullName>tRNA (adenine(58)-N(1))-methyltransferase catalytic subunit trm61</fullName>
        <ecNumber>2.1.1.220</ecNumber>
    </recommendedName>
    <alternativeName>
        <fullName>tRNA(m1A58)-methyltransferase subunit trm61</fullName>
        <shortName>tRNA(m1A58)MTase subunit trm61</shortName>
    </alternativeName>
</protein>
<proteinExistence type="inferred from homology"/>
<reference key="1">
    <citation type="journal article" date="2005" name="Nature">
        <title>Genomic sequence of the pathogenic and allergenic filamentous fungus Aspergillus fumigatus.</title>
        <authorList>
            <person name="Nierman W.C."/>
            <person name="Pain A."/>
            <person name="Anderson M.J."/>
            <person name="Wortman J.R."/>
            <person name="Kim H.S."/>
            <person name="Arroyo J."/>
            <person name="Berriman M."/>
            <person name="Abe K."/>
            <person name="Archer D.B."/>
            <person name="Bermejo C."/>
            <person name="Bennett J.W."/>
            <person name="Bowyer P."/>
            <person name="Chen D."/>
            <person name="Collins M."/>
            <person name="Coulsen R."/>
            <person name="Davies R."/>
            <person name="Dyer P.S."/>
            <person name="Farman M.L."/>
            <person name="Fedorova N."/>
            <person name="Fedorova N.D."/>
            <person name="Feldblyum T.V."/>
            <person name="Fischer R."/>
            <person name="Fosker N."/>
            <person name="Fraser A."/>
            <person name="Garcia J.L."/>
            <person name="Garcia M.J."/>
            <person name="Goble A."/>
            <person name="Goldman G.H."/>
            <person name="Gomi K."/>
            <person name="Griffith-Jones S."/>
            <person name="Gwilliam R."/>
            <person name="Haas B.J."/>
            <person name="Haas H."/>
            <person name="Harris D.E."/>
            <person name="Horiuchi H."/>
            <person name="Huang J."/>
            <person name="Humphray S."/>
            <person name="Jimenez J."/>
            <person name="Keller N."/>
            <person name="Khouri H."/>
            <person name="Kitamoto K."/>
            <person name="Kobayashi T."/>
            <person name="Konzack S."/>
            <person name="Kulkarni R."/>
            <person name="Kumagai T."/>
            <person name="Lafton A."/>
            <person name="Latge J.-P."/>
            <person name="Li W."/>
            <person name="Lord A."/>
            <person name="Lu C."/>
            <person name="Majoros W.H."/>
            <person name="May G.S."/>
            <person name="Miller B.L."/>
            <person name="Mohamoud Y."/>
            <person name="Molina M."/>
            <person name="Monod M."/>
            <person name="Mouyna I."/>
            <person name="Mulligan S."/>
            <person name="Murphy L.D."/>
            <person name="O'Neil S."/>
            <person name="Paulsen I."/>
            <person name="Penalva M.A."/>
            <person name="Pertea M."/>
            <person name="Price C."/>
            <person name="Pritchard B.L."/>
            <person name="Quail M.A."/>
            <person name="Rabbinowitsch E."/>
            <person name="Rawlins N."/>
            <person name="Rajandream M.A."/>
            <person name="Reichard U."/>
            <person name="Renauld H."/>
            <person name="Robson G.D."/>
            <person name="Rodriguez de Cordoba S."/>
            <person name="Rodriguez-Pena J.M."/>
            <person name="Ronning C.M."/>
            <person name="Rutter S."/>
            <person name="Salzberg S.L."/>
            <person name="Sanchez M."/>
            <person name="Sanchez-Ferrero J.C."/>
            <person name="Saunders D."/>
            <person name="Seeger K."/>
            <person name="Squares R."/>
            <person name="Squares S."/>
            <person name="Takeuchi M."/>
            <person name="Tekaia F."/>
            <person name="Turner G."/>
            <person name="Vazquez de Aldana C.R."/>
            <person name="Weidman J."/>
            <person name="White O."/>
            <person name="Woodward J.R."/>
            <person name="Yu J.-H."/>
            <person name="Fraser C.M."/>
            <person name="Galagan J.E."/>
            <person name="Asai K."/>
            <person name="Machida M."/>
            <person name="Hall N."/>
            <person name="Barrell B.G."/>
            <person name="Denning D.W."/>
        </authorList>
    </citation>
    <scope>NUCLEOTIDE SEQUENCE [LARGE SCALE GENOMIC DNA]</scope>
    <source>
        <strain>ATCC MYA-4609 / CBS 101355 / FGSC A1100 / Af293</strain>
    </source>
</reference>
<keyword id="KW-0489">Methyltransferase</keyword>
<keyword id="KW-0539">Nucleus</keyword>
<keyword id="KW-1185">Reference proteome</keyword>
<keyword id="KW-0949">S-adenosyl-L-methionine</keyword>
<keyword id="KW-0808">Transferase</keyword>
<keyword id="KW-0819">tRNA processing</keyword>
<gene>
    <name type="primary">trm61</name>
    <name type="ORF">AFUA_5G09620</name>
</gene>
<sequence length="502" mass="55895">MGSPFLNHRLRSELGDLALLHLRRDQTIPTILKLEDDENQGYKEGKVTNTRFGSFPHSTLIDQPWGSQIVASVVDTGSRGRKNQSSKKRKADDLDTPTSNKDEAQSSPGTPRAAASGFLHLLYPTPELWTASLPHRTQVVYTPDYSYILHRLCVRPGSTIIEAGAGSGSFTHASVRAVFNGYPSEAPAAKKRRLGKVCSFEFHAQRAQRIREEIHDHGLDALVEVTHRDVYEDGFLLGDPKTGKSPKANAIFLDLPAPWLALKHLVRRPPSGAESPLDPSSPVYICTFSPCIEQVQRTITTLREYSWLSISMVEVNHHRIDVKRERTGLDCEGVRGATVFPKSVDEAVAKMRAVEEHSRRFRESLLQESDDEGTASDKPAATKSGKTEVEEKSLQDISQHSDTTAAPSSTPSYDLGRLVHRTEPDLKTHTSYLVFAILPREWTEEDEQRCRQAWPAQKTGGSPDAGKPKGKKQLKREAKEKEVQEEAQKSEDVPARPQETQS</sequence>
<comment type="function">
    <text evidence="1">Catalytic subunit of tRNA (adenine-N(1)-)-methyltransferase, which catalyzes the formation of N(1)-methyladenine at position 58 (m1A58) in initiator methionyl-tRNA.</text>
</comment>
<comment type="catalytic activity">
    <reaction evidence="3">
        <text>adenosine(58) in tRNA + S-adenosyl-L-methionine = N(1)-methyladenosine(58) in tRNA + S-adenosyl-L-homocysteine + H(+)</text>
        <dbReference type="Rhea" id="RHEA:43152"/>
        <dbReference type="Rhea" id="RHEA-COMP:10365"/>
        <dbReference type="Rhea" id="RHEA-COMP:10366"/>
        <dbReference type="ChEBI" id="CHEBI:15378"/>
        <dbReference type="ChEBI" id="CHEBI:57856"/>
        <dbReference type="ChEBI" id="CHEBI:59789"/>
        <dbReference type="ChEBI" id="CHEBI:74411"/>
        <dbReference type="ChEBI" id="CHEBI:74491"/>
        <dbReference type="EC" id="2.1.1.220"/>
    </reaction>
</comment>
<comment type="subunit">
    <text evidence="1">Heterotetramer; composed of two copies of TRM6 and two copies of TRM61.</text>
</comment>
<comment type="subcellular location">
    <subcellularLocation>
        <location evidence="1">Nucleus</location>
    </subcellularLocation>
</comment>
<comment type="similarity">
    <text evidence="3">Belongs to the class I-like SAM-binding methyltransferase superfamily. TRM61 family.</text>
</comment>
<dbReference type="EC" id="2.1.1.220"/>
<dbReference type="EMBL" id="AAHF01000003">
    <property type="protein sequence ID" value="EAL91639.1"/>
    <property type="molecule type" value="Genomic_DNA"/>
</dbReference>
<dbReference type="RefSeq" id="XP_753677.1">
    <property type="nucleotide sequence ID" value="XM_748584.1"/>
</dbReference>
<dbReference type="SMR" id="Q4WUT7"/>
<dbReference type="FunCoup" id="Q4WUT7">
    <property type="interactions" value="616"/>
</dbReference>
<dbReference type="STRING" id="330879.Q4WUT7"/>
<dbReference type="EnsemblFungi" id="EAL91639">
    <property type="protein sequence ID" value="EAL91639"/>
    <property type="gene ID" value="AFUA_5G09620"/>
</dbReference>
<dbReference type="GeneID" id="3511419"/>
<dbReference type="KEGG" id="afm:AFUA_5G09620"/>
<dbReference type="VEuPathDB" id="FungiDB:Afu5g09620"/>
<dbReference type="eggNOG" id="KOG2915">
    <property type="taxonomic scope" value="Eukaryota"/>
</dbReference>
<dbReference type="HOGENOM" id="CLU_025402_2_0_1"/>
<dbReference type="InParanoid" id="Q4WUT7"/>
<dbReference type="OMA" id="IGQPWGS"/>
<dbReference type="OrthoDB" id="1925287at2759"/>
<dbReference type="Proteomes" id="UP000002530">
    <property type="component" value="Chromosome 5"/>
</dbReference>
<dbReference type="GO" id="GO:0005634">
    <property type="term" value="C:nucleus"/>
    <property type="evidence" value="ECO:0000318"/>
    <property type="project" value="GO_Central"/>
</dbReference>
<dbReference type="GO" id="GO:0031515">
    <property type="term" value="C:tRNA (m1A) methyltransferase complex"/>
    <property type="evidence" value="ECO:0000318"/>
    <property type="project" value="GO_Central"/>
</dbReference>
<dbReference type="GO" id="GO:0160107">
    <property type="term" value="F:tRNA (adenine(58)-N1)-methyltransferase activity"/>
    <property type="evidence" value="ECO:0007669"/>
    <property type="project" value="UniProtKB-EC"/>
</dbReference>
<dbReference type="GO" id="GO:0030488">
    <property type="term" value="P:tRNA methylation"/>
    <property type="evidence" value="ECO:0000318"/>
    <property type="project" value="GO_Central"/>
</dbReference>
<dbReference type="FunFam" id="3.40.50.150:FF:000189">
    <property type="entry name" value="tRNA (adenine(58)-N(1))-methyltransferase catalytic subunit TRM61"/>
    <property type="match status" value="1"/>
</dbReference>
<dbReference type="FunFam" id="3.10.330.20:FF:000005">
    <property type="entry name" value="tRNA (Adenine-N(1)-)-methyltransferase catalytic subunit trm61"/>
    <property type="match status" value="1"/>
</dbReference>
<dbReference type="Gene3D" id="3.10.330.20">
    <property type="match status" value="1"/>
</dbReference>
<dbReference type="Gene3D" id="3.40.50.150">
    <property type="entry name" value="Vaccinia Virus protein VP39"/>
    <property type="match status" value="1"/>
</dbReference>
<dbReference type="InterPro" id="IPR029063">
    <property type="entry name" value="SAM-dependent_MTases_sf"/>
</dbReference>
<dbReference type="InterPro" id="IPR049470">
    <property type="entry name" value="TRM61_C"/>
</dbReference>
<dbReference type="InterPro" id="IPR014816">
    <property type="entry name" value="tRNA_MeTrfase_Gcd14"/>
</dbReference>
<dbReference type="PANTHER" id="PTHR12133">
    <property type="entry name" value="TRNA (ADENINE(58)-N(1))-METHYLTRANSFERASE"/>
    <property type="match status" value="1"/>
</dbReference>
<dbReference type="PANTHER" id="PTHR12133:SF2">
    <property type="entry name" value="TRNA (ADENINE(58)-N(1))-METHYLTRANSFERASE CATALYTIC SUBUNIT TRMT61A"/>
    <property type="match status" value="1"/>
</dbReference>
<dbReference type="Pfam" id="PF08704">
    <property type="entry name" value="GCD14"/>
    <property type="match status" value="1"/>
</dbReference>
<dbReference type="SUPFAM" id="SSF53335">
    <property type="entry name" value="S-adenosyl-L-methionine-dependent methyltransferases"/>
    <property type="match status" value="1"/>
</dbReference>
<dbReference type="PROSITE" id="PS51620">
    <property type="entry name" value="SAM_TRM61"/>
    <property type="match status" value="1"/>
</dbReference>
<organism>
    <name type="scientific">Aspergillus fumigatus (strain ATCC MYA-4609 / CBS 101355 / FGSC A1100 / Af293)</name>
    <name type="common">Neosartorya fumigata</name>
    <dbReference type="NCBI Taxonomy" id="330879"/>
    <lineage>
        <taxon>Eukaryota</taxon>
        <taxon>Fungi</taxon>
        <taxon>Dikarya</taxon>
        <taxon>Ascomycota</taxon>
        <taxon>Pezizomycotina</taxon>
        <taxon>Eurotiomycetes</taxon>
        <taxon>Eurotiomycetidae</taxon>
        <taxon>Eurotiales</taxon>
        <taxon>Aspergillaceae</taxon>
        <taxon>Aspergillus</taxon>
        <taxon>Aspergillus subgen. Fumigati</taxon>
    </lineage>
</organism>
<name>TRM61_ASPFU</name>
<evidence type="ECO:0000250" key="1">
    <source>
        <dbReference type="UniProtKB" id="P46959"/>
    </source>
</evidence>
<evidence type="ECO:0000250" key="2">
    <source>
        <dbReference type="UniProtKB" id="Q96FX7"/>
    </source>
</evidence>
<evidence type="ECO:0000255" key="3">
    <source>
        <dbReference type="PROSITE-ProRule" id="PRU00952"/>
    </source>
</evidence>
<evidence type="ECO:0000256" key="4">
    <source>
        <dbReference type="SAM" id="MobiDB-lite"/>
    </source>
</evidence>
<accession>Q4WUT7</accession>
<feature type="chain" id="PRO_0000256168" description="tRNA (adenine(58)-N(1))-methyltransferase catalytic subunit trm61">
    <location>
        <begin position="1"/>
        <end position="502"/>
    </location>
</feature>
<feature type="region of interest" description="Disordered" evidence="4">
    <location>
        <begin position="76"/>
        <end position="112"/>
    </location>
</feature>
<feature type="region of interest" description="Disordered" evidence="4">
    <location>
        <begin position="365"/>
        <end position="417"/>
    </location>
</feature>
<feature type="region of interest" description="Disordered" evidence="4">
    <location>
        <begin position="444"/>
        <end position="502"/>
    </location>
</feature>
<feature type="compositionally biased region" description="Basic residues" evidence="4">
    <location>
        <begin position="79"/>
        <end position="89"/>
    </location>
</feature>
<feature type="compositionally biased region" description="Basic and acidic residues" evidence="4">
    <location>
        <begin position="385"/>
        <end position="394"/>
    </location>
</feature>
<feature type="compositionally biased region" description="Low complexity" evidence="4">
    <location>
        <begin position="403"/>
        <end position="412"/>
    </location>
</feature>
<feature type="compositionally biased region" description="Basic and acidic residues" evidence="4">
    <location>
        <begin position="475"/>
        <end position="494"/>
    </location>
</feature>
<feature type="binding site" evidence="2">
    <location>
        <begin position="167"/>
        <end position="169"/>
    </location>
    <ligand>
        <name>S-adenosyl-L-methionine</name>
        <dbReference type="ChEBI" id="CHEBI:59789"/>
    </ligand>
</feature>
<feature type="binding site" evidence="2 3">
    <location>
        <position position="201"/>
    </location>
    <ligand>
        <name>S-adenosyl-L-methionine</name>
        <dbReference type="ChEBI" id="CHEBI:59789"/>
    </ligand>
</feature>
<feature type="binding site" evidence="2">
    <location>
        <position position="206"/>
    </location>
    <ligand>
        <name>S-adenosyl-L-methionine</name>
        <dbReference type="ChEBI" id="CHEBI:59789"/>
    </ligand>
</feature>
<feature type="binding site" evidence="2">
    <location>
        <begin position="229"/>
        <end position="230"/>
    </location>
    <ligand>
        <name>S-adenosyl-L-methionine</name>
        <dbReference type="ChEBI" id="CHEBI:59789"/>
    </ligand>
</feature>
<feature type="binding site" evidence="2 3">
    <location>
        <position position="254"/>
    </location>
    <ligand>
        <name>S-adenosyl-L-methionine</name>
        <dbReference type="ChEBI" id="CHEBI:59789"/>
    </ligand>
</feature>